<keyword id="KW-0020">Allergen</keyword>
<keyword id="KW-0963">Cytoplasm</keyword>
<keyword id="KW-0520">NAD</keyword>
<keyword id="KW-0560">Oxidoreductase</keyword>
<name>ALDH_ALTAL</name>
<proteinExistence type="evidence at protein level"/>
<feature type="chain" id="PRO_0000056434" description="Aldehyde dehydrogenase">
    <location>
        <begin position="1"/>
        <end position="497"/>
    </location>
</feature>
<feature type="active site" description="Proton acceptor" evidence="2 3">
    <location>
        <position position="264"/>
    </location>
</feature>
<feature type="active site" description="Nucleophile" evidence="2 3">
    <location>
        <position position="298"/>
    </location>
</feature>
<feature type="binding site" evidence="1">
    <location>
        <begin position="241"/>
        <end position="246"/>
    </location>
    <ligand>
        <name>NAD(+)</name>
        <dbReference type="ChEBI" id="CHEBI:57540"/>
    </ligand>
</feature>
<feature type="site" description="Transition state stabilizer" evidence="1">
    <location>
        <position position="148"/>
    </location>
</feature>
<dbReference type="EC" id="1.2.1.3"/>
<dbReference type="EMBL" id="X78227">
    <property type="protein sequence ID" value="CAA55071.2"/>
    <property type="molecule type" value="mRNA"/>
</dbReference>
<dbReference type="PIR" id="S43108">
    <property type="entry name" value="S43108"/>
</dbReference>
<dbReference type="SMR" id="P42041"/>
<dbReference type="Allergome" id="13">
    <property type="allergen name" value="Alt a 10"/>
</dbReference>
<dbReference type="Allergome" id="3057">
    <property type="allergen name" value="Alt a 10.0101"/>
</dbReference>
<dbReference type="VEuPathDB" id="FungiDB:CC77DRAFT_1019268"/>
<dbReference type="UniPathway" id="UPA00780">
    <property type="reaction ID" value="UER00768"/>
</dbReference>
<dbReference type="GO" id="GO:0005737">
    <property type="term" value="C:cytoplasm"/>
    <property type="evidence" value="ECO:0007669"/>
    <property type="project" value="UniProtKB-SubCell"/>
</dbReference>
<dbReference type="GO" id="GO:0004029">
    <property type="term" value="F:aldehyde dehydrogenase (NAD+) activity"/>
    <property type="evidence" value="ECO:0007669"/>
    <property type="project" value="UniProtKB-EC"/>
</dbReference>
<dbReference type="GO" id="GO:0006068">
    <property type="term" value="P:ethanol catabolic process"/>
    <property type="evidence" value="ECO:0007669"/>
    <property type="project" value="UniProtKB-UniPathway"/>
</dbReference>
<dbReference type="CDD" id="cd07091">
    <property type="entry name" value="ALDH_F1-2_Ald2-like"/>
    <property type="match status" value="1"/>
</dbReference>
<dbReference type="FunFam" id="3.40.605.10:FF:000011">
    <property type="entry name" value="ALD5p Mitochondrial aldehyde dehydrogenase"/>
    <property type="match status" value="1"/>
</dbReference>
<dbReference type="FunFam" id="3.40.605.10:FF:000026">
    <property type="entry name" value="Aldehyde dehydrogenase, putative"/>
    <property type="match status" value="1"/>
</dbReference>
<dbReference type="FunFam" id="3.40.309.10:FF:000001">
    <property type="entry name" value="Mitochondrial aldehyde dehydrogenase 2"/>
    <property type="match status" value="1"/>
</dbReference>
<dbReference type="Gene3D" id="3.40.605.10">
    <property type="entry name" value="Aldehyde Dehydrogenase, Chain A, domain 1"/>
    <property type="match status" value="1"/>
</dbReference>
<dbReference type="Gene3D" id="3.40.309.10">
    <property type="entry name" value="Aldehyde Dehydrogenase, Chain A, domain 2"/>
    <property type="match status" value="1"/>
</dbReference>
<dbReference type="InterPro" id="IPR016161">
    <property type="entry name" value="Ald_DH/histidinol_DH"/>
</dbReference>
<dbReference type="InterPro" id="IPR016163">
    <property type="entry name" value="Ald_DH_C"/>
</dbReference>
<dbReference type="InterPro" id="IPR016160">
    <property type="entry name" value="Ald_DH_CS_CYS"/>
</dbReference>
<dbReference type="InterPro" id="IPR029510">
    <property type="entry name" value="Ald_DH_CS_GLU"/>
</dbReference>
<dbReference type="InterPro" id="IPR016162">
    <property type="entry name" value="Ald_DH_N"/>
</dbReference>
<dbReference type="InterPro" id="IPR015590">
    <property type="entry name" value="Aldehyde_DH_dom"/>
</dbReference>
<dbReference type="PANTHER" id="PTHR11699">
    <property type="entry name" value="ALDEHYDE DEHYDROGENASE-RELATED"/>
    <property type="match status" value="1"/>
</dbReference>
<dbReference type="Pfam" id="PF00171">
    <property type="entry name" value="Aldedh"/>
    <property type="match status" value="1"/>
</dbReference>
<dbReference type="SUPFAM" id="SSF53720">
    <property type="entry name" value="ALDH-like"/>
    <property type="match status" value="1"/>
</dbReference>
<dbReference type="PROSITE" id="PS00070">
    <property type="entry name" value="ALDEHYDE_DEHYDR_CYS"/>
    <property type="match status" value="1"/>
</dbReference>
<dbReference type="PROSITE" id="PS00687">
    <property type="entry name" value="ALDEHYDE_DEHYDR_GLU"/>
    <property type="match status" value="1"/>
</dbReference>
<gene>
    <name type="primary">ALTA10</name>
</gene>
<evidence type="ECO:0000250" key="1"/>
<evidence type="ECO:0000255" key="2">
    <source>
        <dbReference type="PROSITE-ProRule" id="PRU10007"/>
    </source>
</evidence>
<evidence type="ECO:0000255" key="3">
    <source>
        <dbReference type="PROSITE-ProRule" id="PRU10008"/>
    </source>
</evidence>
<evidence type="ECO:0000305" key="4"/>
<comment type="catalytic activity">
    <reaction>
        <text>an aldehyde + NAD(+) + H2O = a carboxylate + NADH + 2 H(+)</text>
        <dbReference type="Rhea" id="RHEA:16185"/>
        <dbReference type="ChEBI" id="CHEBI:15377"/>
        <dbReference type="ChEBI" id="CHEBI:15378"/>
        <dbReference type="ChEBI" id="CHEBI:17478"/>
        <dbReference type="ChEBI" id="CHEBI:29067"/>
        <dbReference type="ChEBI" id="CHEBI:57540"/>
        <dbReference type="ChEBI" id="CHEBI:57945"/>
        <dbReference type="EC" id="1.2.1.3"/>
    </reaction>
</comment>
<comment type="pathway">
    <text>Alcohol metabolism; ethanol degradation; acetate from ethanol: step 2/2.</text>
</comment>
<comment type="subcellular location">
    <subcellularLocation>
        <location evidence="4">Cytoplasm</location>
    </subcellularLocation>
</comment>
<comment type="allergen">
    <text>Causes an allergic reaction in human.</text>
</comment>
<comment type="similarity">
    <text evidence="4">Belongs to the aldehyde dehydrogenase family.</text>
</comment>
<accession>P42041</accession>
<organism>
    <name type="scientific">Alternaria alternata</name>
    <name type="common">Alternaria rot fungus</name>
    <name type="synonym">Torula alternata</name>
    <dbReference type="NCBI Taxonomy" id="5599"/>
    <lineage>
        <taxon>Eukaryota</taxon>
        <taxon>Fungi</taxon>
        <taxon>Dikarya</taxon>
        <taxon>Ascomycota</taxon>
        <taxon>Pezizomycotina</taxon>
        <taxon>Dothideomycetes</taxon>
        <taxon>Pleosporomycetidae</taxon>
        <taxon>Pleosporales</taxon>
        <taxon>Pleosporineae</taxon>
        <taxon>Pleosporaceae</taxon>
        <taxon>Alternaria</taxon>
        <taxon>Alternaria sect. Alternaria</taxon>
        <taxon>Alternaria alternata complex</taxon>
    </lineage>
</organism>
<protein>
    <recommendedName>
        <fullName>Aldehyde dehydrogenase</fullName>
        <shortName>ALDDH</shortName>
        <shortName>ALDH</shortName>
        <ecNumber>1.2.1.3</ecNumber>
    </recommendedName>
    <alternativeName>
        <fullName>Allergen Alt a X</fullName>
    </alternativeName>
    <allergenName>Alt a 10</allergenName>
</protein>
<sequence>MTSVKLSTPQTGEFEQPTGLFINNEFVKAVDGKTFDVINPSTEEVICSVQEATEKDVDIAVAAARKAFNGPWRKETPENRGKLLNKLADLFEKNADLIAAVEALDNGKAFSMAKNVDVPAAAGCLRYYGGWADKIEGKVVDTAPDSFNYIRKEPIGVCGQIIPWNFPILMWSWKIGPAIATGNTVVLKTAEQTPLSAYIACKLIQEAGFPPGVINVITGFGKIAGAAMSAHMDIDKIAFTGSTVVGRQIMKSAAGSNLKKVTLELGGKSPNIVFADADLDEAIHWVNFGIYFNHGQACCAGSRIYVQEEIYDKFIQRFKERAAQNAVGDPFAADTFQGPQVSQLQFDRIMGYIEEGKKSGATIETGGNRKGDKGYFIEPTIFSNVTEDMKIQQEEIFGPVCTISKFKTKADVIKIGNNTTYGLAAAVHTSNLTTAIEVANALRAGTVWVNSYNTLHWQLPFGGYKESGIGRELGEAALDNYIQTKTVSIRLGDVLFG</sequence>
<reference key="1">
    <citation type="journal article" date="1995" name="Mol. Immunol.">
        <title>Molecular cloning of major and minor allergens of Alternaria alternata and Cladosporium herbarum.</title>
        <authorList>
            <person name="Achatz G."/>
            <person name="Oberkofler H."/>
            <person name="Lechenauer E."/>
            <person name="Simon-Nobbe B."/>
            <person name="Unger A."/>
            <person name="Kandler D."/>
            <person name="Ebner C."/>
            <person name="Prillinger H."/>
            <person name="Kraft D."/>
            <person name="Breitenbach M."/>
        </authorList>
    </citation>
    <scope>NUCLEOTIDE SEQUENCE [MRNA]</scope>
    <source>
        <strain>08-0203-Berlin</strain>
    </source>
</reference>
<reference key="2">
    <citation type="submission" date="2005-09" db="EMBL/GenBank/DDBJ databases">
        <authorList>
            <person name="Simon-Nobbe B."/>
        </authorList>
    </citation>
    <scope>SEQUENCE REVISION TO 73; 153-166; 334-336 AND 424</scope>
</reference>
<reference key="3">
    <citation type="journal article" date="2008" name="Int. Arch. Allergy Immunol.">
        <title>The spectrum of fungal allergy.</title>
        <authorList>
            <person name="Simon-Nobbe B."/>
            <person name="Denk U."/>
            <person name="Poell V."/>
            <person name="Rid R."/>
            <person name="Breitenbach M."/>
        </authorList>
    </citation>
    <scope>REVIEW</scope>
</reference>